<feature type="chain" id="PRO_1000006201" description="Elongation factor Ts">
    <location>
        <begin position="1"/>
        <end position="219"/>
    </location>
</feature>
<feature type="region of interest" description="Involved in Mg(2+) ion dislocation from EF-Tu" evidence="1">
    <location>
        <begin position="82"/>
        <end position="85"/>
    </location>
</feature>
<keyword id="KW-0963">Cytoplasm</keyword>
<keyword id="KW-0251">Elongation factor</keyword>
<keyword id="KW-0648">Protein biosynthesis</keyword>
<gene>
    <name evidence="1" type="primary">tsf</name>
    <name type="ordered locus">Tery_1160</name>
</gene>
<comment type="function">
    <text evidence="1">Associates with the EF-Tu.GDP complex and induces the exchange of GDP to GTP. It remains bound to the aminoacyl-tRNA.EF-Tu.GTP complex up to the GTP hydrolysis stage on the ribosome.</text>
</comment>
<comment type="subcellular location">
    <subcellularLocation>
        <location evidence="1">Cytoplasm</location>
    </subcellularLocation>
</comment>
<comment type="similarity">
    <text evidence="1">Belongs to the EF-Ts family.</text>
</comment>
<protein>
    <recommendedName>
        <fullName evidence="1">Elongation factor Ts</fullName>
        <shortName evidence="1">EF-Ts</shortName>
    </recommendedName>
</protein>
<evidence type="ECO:0000255" key="1">
    <source>
        <dbReference type="HAMAP-Rule" id="MF_00050"/>
    </source>
</evidence>
<proteinExistence type="inferred from homology"/>
<reference key="1">
    <citation type="journal article" date="2015" name="Proc. Natl. Acad. Sci. U.S.A.">
        <title>Trichodesmium genome maintains abundant, widespread noncoding DNA in situ, despite oligotrophic lifestyle.</title>
        <authorList>
            <person name="Walworth N."/>
            <person name="Pfreundt U."/>
            <person name="Nelson W.C."/>
            <person name="Mincer T."/>
            <person name="Heidelberg J.F."/>
            <person name="Fu F."/>
            <person name="Waterbury J.B."/>
            <person name="Glavina del Rio T."/>
            <person name="Goodwin L."/>
            <person name="Kyrpides N.C."/>
            <person name="Land M.L."/>
            <person name="Woyke T."/>
            <person name="Hutchins D.A."/>
            <person name="Hess W.R."/>
            <person name="Webb E.A."/>
        </authorList>
    </citation>
    <scope>NUCLEOTIDE SEQUENCE [LARGE SCALE GENOMIC DNA]</scope>
    <source>
        <strain>IMS101</strain>
    </source>
</reference>
<name>EFTS_TRIEI</name>
<organism>
    <name type="scientific">Trichodesmium erythraeum (strain IMS101)</name>
    <dbReference type="NCBI Taxonomy" id="203124"/>
    <lineage>
        <taxon>Bacteria</taxon>
        <taxon>Bacillati</taxon>
        <taxon>Cyanobacteriota</taxon>
        <taxon>Cyanophyceae</taxon>
        <taxon>Oscillatoriophycideae</taxon>
        <taxon>Oscillatoriales</taxon>
        <taxon>Microcoleaceae</taxon>
        <taxon>Trichodesmium</taxon>
    </lineage>
</organism>
<sequence length="219" mass="24492">MAEISAKLVKELREKTGAGMMDCKKALKETDGNIDKATDWLRQKGIASAGKLEGKVATEGLVESYIHTGGRIGVLVEVNCQTDFVARNESFKELVKNVAMQIAACPQVEYVSVDDIPTEFVESEKSIEMGREDLSNKPENIREKIVQGRIGKRLKELTLMDQPYIRDQNKTIEELIKETSAQLGEKVQVRRFIRFVLGEGLEKQESNFAEEVAAQTGKK</sequence>
<accession>Q116Q3</accession>
<dbReference type="EMBL" id="CP000393">
    <property type="protein sequence ID" value="ABG50521.1"/>
    <property type="molecule type" value="Genomic_DNA"/>
</dbReference>
<dbReference type="RefSeq" id="WP_011610907.1">
    <property type="nucleotide sequence ID" value="NC_008312.1"/>
</dbReference>
<dbReference type="SMR" id="Q116Q3"/>
<dbReference type="STRING" id="203124.Tery_1160"/>
<dbReference type="KEGG" id="ter:Tery_1160"/>
<dbReference type="eggNOG" id="COG0264">
    <property type="taxonomic scope" value="Bacteria"/>
</dbReference>
<dbReference type="HOGENOM" id="CLU_047155_1_1_3"/>
<dbReference type="OrthoDB" id="9808348at2"/>
<dbReference type="GO" id="GO:0005737">
    <property type="term" value="C:cytoplasm"/>
    <property type="evidence" value="ECO:0007669"/>
    <property type="project" value="UniProtKB-SubCell"/>
</dbReference>
<dbReference type="GO" id="GO:0003746">
    <property type="term" value="F:translation elongation factor activity"/>
    <property type="evidence" value="ECO:0007669"/>
    <property type="project" value="UniProtKB-UniRule"/>
</dbReference>
<dbReference type="CDD" id="cd14275">
    <property type="entry name" value="UBA_EF-Ts"/>
    <property type="match status" value="1"/>
</dbReference>
<dbReference type="FunFam" id="1.10.286.20:FF:000001">
    <property type="entry name" value="Elongation factor Ts"/>
    <property type="match status" value="1"/>
</dbReference>
<dbReference type="FunFam" id="1.10.8.10:FF:000001">
    <property type="entry name" value="Elongation factor Ts"/>
    <property type="match status" value="1"/>
</dbReference>
<dbReference type="Gene3D" id="1.10.286.20">
    <property type="match status" value="1"/>
</dbReference>
<dbReference type="Gene3D" id="1.10.8.10">
    <property type="entry name" value="DNA helicase RuvA subunit, C-terminal domain"/>
    <property type="match status" value="1"/>
</dbReference>
<dbReference type="Gene3D" id="3.30.479.20">
    <property type="entry name" value="Elongation factor Ts, dimerisation domain"/>
    <property type="match status" value="1"/>
</dbReference>
<dbReference type="HAMAP" id="MF_00050">
    <property type="entry name" value="EF_Ts"/>
    <property type="match status" value="1"/>
</dbReference>
<dbReference type="InterPro" id="IPR036402">
    <property type="entry name" value="EF-Ts_dimer_sf"/>
</dbReference>
<dbReference type="InterPro" id="IPR001816">
    <property type="entry name" value="Transl_elong_EFTs/EF1B"/>
</dbReference>
<dbReference type="InterPro" id="IPR014039">
    <property type="entry name" value="Transl_elong_EFTs/EF1B_dimer"/>
</dbReference>
<dbReference type="InterPro" id="IPR018101">
    <property type="entry name" value="Transl_elong_Ts_CS"/>
</dbReference>
<dbReference type="InterPro" id="IPR009060">
    <property type="entry name" value="UBA-like_sf"/>
</dbReference>
<dbReference type="NCBIfam" id="TIGR00116">
    <property type="entry name" value="tsf"/>
    <property type="match status" value="2"/>
</dbReference>
<dbReference type="PANTHER" id="PTHR11741">
    <property type="entry name" value="ELONGATION FACTOR TS"/>
    <property type="match status" value="1"/>
</dbReference>
<dbReference type="PANTHER" id="PTHR11741:SF10">
    <property type="entry name" value="POLYPROTEIN OF EF-TS, CHLOROPLASTIC"/>
    <property type="match status" value="1"/>
</dbReference>
<dbReference type="Pfam" id="PF00889">
    <property type="entry name" value="EF_TS"/>
    <property type="match status" value="1"/>
</dbReference>
<dbReference type="SUPFAM" id="SSF54713">
    <property type="entry name" value="Elongation factor Ts (EF-Ts), dimerisation domain"/>
    <property type="match status" value="1"/>
</dbReference>
<dbReference type="SUPFAM" id="SSF46934">
    <property type="entry name" value="UBA-like"/>
    <property type="match status" value="1"/>
</dbReference>
<dbReference type="PROSITE" id="PS01126">
    <property type="entry name" value="EF_TS_1"/>
    <property type="match status" value="1"/>
</dbReference>
<dbReference type="PROSITE" id="PS01127">
    <property type="entry name" value="EF_TS_2"/>
    <property type="match status" value="1"/>
</dbReference>